<reference key="1">
    <citation type="journal article" date="2008" name="J. Bacteriol.">
        <title>Genome sequence of the streptomycin-producing microorganism Streptomyces griseus IFO 13350.</title>
        <authorList>
            <person name="Ohnishi Y."/>
            <person name="Ishikawa J."/>
            <person name="Hara H."/>
            <person name="Suzuki H."/>
            <person name="Ikenoya M."/>
            <person name="Ikeda H."/>
            <person name="Yamashita A."/>
            <person name="Hattori M."/>
            <person name="Horinouchi S."/>
        </authorList>
    </citation>
    <scope>NUCLEOTIDE SEQUENCE [LARGE SCALE GENOMIC DNA]</scope>
    <source>
        <strain>JCM 4626 / CBS 651.72 / NBRC 13350 / KCC S-0626 / ISP 5235</strain>
    </source>
</reference>
<dbReference type="EMBL" id="AP009493">
    <property type="protein sequence ID" value="BAG17672.1"/>
    <property type="status" value="ALT_INIT"/>
    <property type="molecule type" value="Genomic_DNA"/>
</dbReference>
<dbReference type="SMR" id="B1VSW8"/>
<dbReference type="KEGG" id="sgr:SGR_843"/>
<dbReference type="PATRIC" id="fig|455632.4.peg.834"/>
<dbReference type="eggNOG" id="COG0829">
    <property type="taxonomic scope" value="Bacteria"/>
</dbReference>
<dbReference type="HOGENOM" id="CLU_056339_1_0_11"/>
<dbReference type="Proteomes" id="UP000001685">
    <property type="component" value="Chromosome"/>
</dbReference>
<dbReference type="GO" id="GO:0005737">
    <property type="term" value="C:cytoplasm"/>
    <property type="evidence" value="ECO:0007669"/>
    <property type="project" value="UniProtKB-SubCell"/>
</dbReference>
<dbReference type="GO" id="GO:0016151">
    <property type="term" value="F:nickel cation binding"/>
    <property type="evidence" value="ECO:0007669"/>
    <property type="project" value="UniProtKB-UniRule"/>
</dbReference>
<dbReference type="HAMAP" id="MF_01384">
    <property type="entry name" value="UreD"/>
    <property type="match status" value="1"/>
</dbReference>
<dbReference type="InterPro" id="IPR002669">
    <property type="entry name" value="UreD"/>
</dbReference>
<dbReference type="PANTHER" id="PTHR33643">
    <property type="entry name" value="UREASE ACCESSORY PROTEIN D"/>
    <property type="match status" value="1"/>
</dbReference>
<dbReference type="PANTHER" id="PTHR33643:SF1">
    <property type="entry name" value="UREASE ACCESSORY PROTEIN D"/>
    <property type="match status" value="1"/>
</dbReference>
<dbReference type="Pfam" id="PF01774">
    <property type="entry name" value="UreD"/>
    <property type="match status" value="1"/>
</dbReference>
<comment type="function">
    <text evidence="1">Required for maturation of urease via the functional incorporation of the urease nickel metallocenter.</text>
</comment>
<comment type="subunit">
    <text evidence="1">UreD, UreF and UreG form a complex that acts as a GTP-hydrolysis-dependent molecular chaperone, activating the urease apoprotein by helping to assemble the nickel containing metallocenter of UreC. The UreE protein probably delivers the nickel.</text>
</comment>
<comment type="subcellular location">
    <subcellularLocation>
        <location evidence="1">Cytoplasm</location>
    </subcellularLocation>
</comment>
<comment type="similarity">
    <text evidence="1">Belongs to the UreD family.</text>
</comment>
<comment type="sequence caution" evidence="2">
    <conflict type="erroneous initiation">
        <sequence resource="EMBL-CDS" id="BAG17672"/>
    </conflict>
</comment>
<feature type="chain" id="PRO_0000346608" description="Urease accessory protein UreD 2">
    <location>
        <begin position="1"/>
        <end position="293"/>
    </location>
</feature>
<evidence type="ECO:0000255" key="1">
    <source>
        <dbReference type="HAMAP-Rule" id="MF_01384"/>
    </source>
</evidence>
<evidence type="ECO:0000305" key="2"/>
<sequence>MAALASVPDTLAPGSPAKVGILDLAFAVRGGRTELVERYQKTPLQIMRPLWIDPEQPGMSYVYIMATGAGVAQADRYRMDFRCGPDTQVHLTTQAATKIFRMEHDYASQRVHLSAEAGSYVEYLPDPLIPFKGSRFYQRTEVTVAPGATVVVADTLTAGRLARGERHAYRVLATDLHISRPDGTLLAIDTLRLVPGRRGGGVLGPAVFAGHDLVASLFAVTDRVPATVLADALHDALAGLGLLHGVSVLPRDCGAWVRVLDDSPIRIAGAQEAVRQAVRRLLTGRPAPDLRKP</sequence>
<accession>B1VSW8</accession>
<organism>
    <name type="scientific">Streptomyces griseus subsp. griseus (strain JCM 4626 / CBS 651.72 / NBRC 13350 / KCC S-0626 / ISP 5235)</name>
    <dbReference type="NCBI Taxonomy" id="455632"/>
    <lineage>
        <taxon>Bacteria</taxon>
        <taxon>Bacillati</taxon>
        <taxon>Actinomycetota</taxon>
        <taxon>Actinomycetes</taxon>
        <taxon>Kitasatosporales</taxon>
        <taxon>Streptomycetaceae</taxon>
        <taxon>Streptomyces</taxon>
    </lineage>
</organism>
<protein>
    <recommendedName>
        <fullName evidence="1">Urease accessory protein UreD 2</fullName>
    </recommendedName>
</protein>
<proteinExistence type="inferred from homology"/>
<keyword id="KW-0143">Chaperone</keyword>
<keyword id="KW-0963">Cytoplasm</keyword>
<keyword id="KW-0996">Nickel insertion</keyword>
<gene>
    <name evidence="1" type="primary">ureD2</name>
    <name type="ordered locus">SGR_843</name>
</gene>
<name>URED2_STRGG</name>